<evidence type="ECO:0000255" key="1">
    <source>
        <dbReference type="HAMAP-Rule" id="MF_01107"/>
    </source>
</evidence>
<protein>
    <recommendedName>
        <fullName evidence="1">Acetylornithine aminotransferase</fullName>
        <shortName evidence="1">ACOAT</shortName>
        <ecNumber evidence="1">2.6.1.11</ecNumber>
    </recommendedName>
</protein>
<sequence>MKHVFPTYKRFPIDLVNGTGTVVTDKNGKTYLDFTSGIAVCNLGHCPANVAEAVQQQLTNIWHTSNLYECALQDSVAELIADGKDRLVFFCNSGTEANEAALKLARKYTGKEKIITFEKSFHGRTFGSMSATAQAKIHQGFGGLVPGFTYVPYNDIEAFRAEIDEHTAAVMLEVIQGEGGVIPANAAFLLEVQLLCKKMGVLLIIDEVQTGLGRTGTLYGFEQIGLEPDIFTLAKGLGNGLPIGAMVGKANLSSAFGPGSHGSTFGGNKLALAAAKEILRTMKQAGFLEEVNAKADYFRYLLEVHLEALDNVSVIRGGGFLIGIELENTAEPVVTELRDKGLLILTAGANVLRILPPLTVSYAEIDQAIYLLKSVLENQLIGSEEG</sequence>
<feature type="chain" id="PRO_0000112753" description="Acetylornithine aminotransferase">
    <location>
        <begin position="1"/>
        <end position="386"/>
    </location>
</feature>
<feature type="binding site" evidence="1">
    <location>
        <begin position="94"/>
        <end position="95"/>
    </location>
    <ligand>
        <name>pyridoxal 5'-phosphate</name>
        <dbReference type="ChEBI" id="CHEBI:597326"/>
    </ligand>
</feature>
<feature type="binding site" evidence="1">
    <location>
        <position position="121"/>
    </location>
    <ligand>
        <name>pyridoxal 5'-phosphate</name>
        <dbReference type="ChEBI" id="CHEBI:597326"/>
    </ligand>
</feature>
<feature type="binding site" evidence="1">
    <location>
        <position position="124"/>
    </location>
    <ligand>
        <name>N(2)-acetyl-L-ornithine</name>
        <dbReference type="ChEBI" id="CHEBI:57805"/>
    </ligand>
</feature>
<feature type="binding site" evidence="1">
    <location>
        <begin position="206"/>
        <end position="209"/>
    </location>
    <ligand>
        <name>pyridoxal 5'-phosphate</name>
        <dbReference type="ChEBI" id="CHEBI:597326"/>
    </ligand>
</feature>
<feature type="binding site" evidence="1">
    <location>
        <position position="263"/>
    </location>
    <ligand>
        <name>N(2)-acetyl-L-ornithine</name>
        <dbReference type="ChEBI" id="CHEBI:57805"/>
    </ligand>
</feature>
<feature type="binding site" evidence="1">
    <location>
        <position position="264"/>
    </location>
    <ligand>
        <name>pyridoxal 5'-phosphate</name>
        <dbReference type="ChEBI" id="CHEBI:597326"/>
    </ligand>
</feature>
<feature type="modified residue" description="N6-(pyridoxal phosphate)lysine" evidence="1">
    <location>
        <position position="235"/>
    </location>
</feature>
<accession>Q71Z79</accession>
<dbReference type="EC" id="2.6.1.11" evidence="1"/>
<dbReference type="EMBL" id="AE017262">
    <property type="protein sequence ID" value="AAT04385.1"/>
    <property type="molecule type" value="Genomic_DNA"/>
</dbReference>
<dbReference type="RefSeq" id="WP_003725999.1">
    <property type="nucleotide sequence ID" value="NC_002973.6"/>
</dbReference>
<dbReference type="SMR" id="Q71Z79"/>
<dbReference type="KEGG" id="lmf:LMOf2365_1610"/>
<dbReference type="HOGENOM" id="CLU_016922_10_1_9"/>
<dbReference type="UniPathway" id="UPA00068">
    <property type="reaction ID" value="UER00109"/>
</dbReference>
<dbReference type="GO" id="GO:0005737">
    <property type="term" value="C:cytoplasm"/>
    <property type="evidence" value="ECO:0007669"/>
    <property type="project" value="UniProtKB-SubCell"/>
</dbReference>
<dbReference type="GO" id="GO:0042802">
    <property type="term" value="F:identical protein binding"/>
    <property type="evidence" value="ECO:0007669"/>
    <property type="project" value="TreeGrafter"/>
</dbReference>
<dbReference type="GO" id="GO:0003992">
    <property type="term" value="F:N2-acetyl-L-ornithine:2-oxoglutarate 5-aminotransferase activity"/>
    <property type="evidence" value="ECO:0007669"/>
    <property type="project" value="UniProtKB-UniRule"/>
</dbReference>
<dbReference type="GO" id="GO:0030170">
    <property type="term" value="F:pyridoxal phosphate binding"/>
    <property type="evidence" value="ECO:0007669"/>
    <property type="project" value="InterPro"/>
</dbReference>
<dbReference type="GO" id="GO:0006526">
    <property type="term" value="P:L-arginine biosynthetic process"/>
    <property type="evidence" value="ECO:0007669"/>
    <property type="project" value="UniProtKB-UniRule"/>
</dbReference>
<dbReference type="CDD" id="cd00610">
    <property type="entry name" value="OAT_like"/>
    <property type="match status" value="1"/>
</dbReference>
<dbReference type="FunFam" id="3.40.640.10:FF:000004">
    <property type="entry name" value="Acetylornithine aminotransferase"/>
    <property type="match status" value="1"/>
</dbReference>
<dbReference type="Gene3D" id="3.90.1150.10">
    <property type="entry name" value="Aspartate Aminotransferase, domain 1"/>
    <property type="match status" value="1"/>
</dbReference>
<dbReference type="Gene3D" id="3.40.640.10">
    <property type="entry name" value="Type I PLP-dependent aspartate aminotransferase-like (Major domain)"/>
    <property type="match status" value="1"/>
</dbReference>
<dbReference type="HAMAP" id="MF_01107">
    <property type="entry name" value="ArgD_aminotrans_3"/>
    <property type="match status" value="1"/>
</dbReference>
<dbReference type="InterPro" id="IPR004636">
    <property type="entry name" value="AcOrn/SuccOrn_fam"/>
</dbReference>
<dbReference type="InterPro" id="IPR005814">
    <property type="entry name" value="Aminotrans_3"/>
</dbReference>
<dbReference type="InterPro" id="IPR049704">
    <property type="entry name" value="Aminotrans_3_PPA_site"/>
</dbReference>
<dbReference type="InterPro" id="IPR050103">
    <property type="entry name" value="Class-III_PLP-dep_AT"/>
</dbReference>
<dbReference type="InterPro" id="IPR015424">
    <property type="entry name" value="PyrdxlP-dep_Trfase"/>
</dbReference>
<dbReference type="InterPro" id="IPR015421">
    <property type="entry name" value="PyrdxlP-dep_Trfase_major"/>
</dbReference>
<dbReference type="InterPro" id="IPR015422">
    <property type="entry name" value="PyrdxlP-dep_Trfase_small"/>
</dbReference>
<dbReference type="NCBIfam" id="TIGR00707">
    <property type="entry name" value="argD"/>
    <property type="match status" value="1"/>
</dbReference>
<dbReference type="NCBIfam" id="NF002325">
    <property type="entry name" value="PRK01278.1"/>
    <property type="match status" value="1"/>
</dbReference>
<dbReference type="NCBIfam" id="NF002797">
    <property type="entry name" value="PRK02936.1"/>
    <property type="match status" value="1"/>
</dbReference>
<dbReference type="PANTHER" id="PTHR11986:SF79">
    <property type="entry name" value="ACETYLORNITHINE AMINOTRANSFERASE, MITOCHONDRIAL"/>
    <property type="match status" value="1"/>
</dbReference>
<dbReference type="PANTHER" id="PTHR11986">
    <property type="entry name" value="AMINOTRANSFERASE CLASS III"/>
    <property type="match status" value="1"/>
</dbReference>
<dbReference type="Pfam" id="PF00202">
    <property type="entry name" value="Aminotran_3"/>
    <property type="match status" value="1"/>
</dbReference>
<dbReference type="PIRSF" id="PIRSF000521">
    <property type="entry name" value="Transaminase_4ab_Lys_Orn"/>
    <property type="match status" value="1"/>
</dbReference>
<dbReference type="SUPFAM" id="SSF53383">
    <property type="entry name" value="PLP-dependent transferases"/>
    <property type="match status" value="1"/>
</dbReference>
<dbReference type="PROSITE" id="PS00600">
    <property type="entry name" value="AA_TRANSFER_CLASS_3"/>
    <property type="match status" value="1"/>
</dbReference>
<keyword id="KW-0028">Amino-acid biosynthesis</keyword>
<keyword id="KW-0032">Aminotransferase</keyword>
<keyword id="KW-0055">Arginine biosynthesis</keyword>
<keyword id="KW-0963">Cytoplasm</keyword>
<keyword id="KW-0663">Pyridoxal phosphate</keyword>
<keyword id="KW-0808">Transferase</keyword>
<reference key="1">
    <citation type="journal article" date="2004" name="Nucleic Acids Res.">
        <title>Whole genome comparisons of serotype 4b and 1/2a strains of the food-borne pathogen Listeria monocytogenes reveal new insights into the core genome components of this species.</title>
        <authorList>
            <person name="Nelson K.E."/>
            <person name="Fouts D.E."/>
            <person name="Mongodin E.F."/>
            <person name="Ravel J."/>
            <person name="DeBoy R.T."/>
            <person name="Kolonay J.F."/>
            <person name="Rasko D.A."/>
            <person name="Angiuoli S.V."/>
            <person name="Gill S.R."/>
            <person name="Paulsen I.T."/>
            <person name="Peterson J.D."/>
            <person name="White O."/>
            <person name="Nelson W.C."/>
            <person name="Nierman W.C."/>
            <person name="Beanan M.J."/>
            <person name="Brinkac L.M."/>
            <person name="Daugherty S.C."/>
            <person name="Dodson R.J."/>
            <person name="Durkin A.S."/>
            <person name="Madupu R."/>
            <person name="Haft D.H."/>
            <person name="Selengut J."/>
            <person name="Van Aken S.E."/>
            <person name="Khouri H.M."/>
            <person name="Fedorova N."/>
            <person name="Forberger H.A."/>
            <person name="Tran B."/>
            <person name="Kathariou S."/>
            <person name="Wonderling L.D."/>
            <person name="Uhlich G.A."/>
            <person name="Bayles D.O."/>
            <person name="Luchansky J.B."/>
            <person name="Fraser C.M."/>
        </authorList>
    </citation>
    <scope>NUCLEOTIDE SEQUENCE [LARGE SCALE GENOMIC DNA]</scope>
    <source>
        <strain>F2365</strain>
    </source>
</reference>
<comment type="catalytic activity">
    <reaction evidence="1">
        <text>N(2)-acetyl-L-ornithine + 2-oxoglutarate = N-acetyl-L-glutamate 5-semialdehyde + L-glutamate</text>
        <dbReference type="Rhea" id="RHEA:18049"/>
        <dbReference type="ChEBI" id="CHEBI:16810"/>
        <dbReference type="ChEBI" id="CHEBI:29123"/>
        <dbReference type="ChEBI" id="CHEBI:29985"/>
        <dbReference type="ChEBI" id="CHEBI:57805"/>
        <dbReference type="EC" id="2.6.1.11"/>
    </reaction>
</comment>
<comment type="cofactor">
    <cofactor evidence="1">
        <name>pyridoxal 5'-phosphate</name>
        <dbReference type="ChEBI" id="CHEBI:597326"/>
    </cofactor>
    <text evidence="1">Binds 1 pyridoxal phosphate per subunit.</text>
</comment>
<comment type="pathway">
    <text evidence="1">Amino-acid biosynthesis; L-arginine biosynthesis; N(2)-acetyl-L-ornithine from L-glutamate: step 4/4.</text>
</comment>
<comment type="subunit">
    <text evidence="1">Homodimer.</text>
</comment>
<comment type="subcellular location">
    <subcellularLocation>
        <location evidence="1">Cytoplasm</location>
    </subcellularLocation>
</comment>
<comment type="miscellaneous">
    <text evidence="1">May also have succinyldiaminopimelate aminotransferase activity, thus carrying out the corresponding step in lysine biosynthesis.</text>
</comment>
<comment type="similarity">
    <text evidence="1">Belongs to the class-III pyridoxal-phosphate-dependent aminotransferase family. ArgD subfamily.</text>
</comment>
<organism>
    <name type="scientific">Listeria monocytogenes serotype 4b (strain F2365)</name>
    <dbReference type="NCBI Taxonomy" id="265669"/>
    <lineage>
        <taxon>Bacteria</taxon>
        <taxon>Bacillati</taxon>
        <taxon>Bacillota</taxon>
        <taxon>Bacilli</taxon>
        <taxon>Bacillales</taxon>
        <taxon>Listeriaceae</taxon>
        <taxon>Listeria</taxon>
    </lineage>
</organism>
<name>ARGD_LISMF</name>
<proteinExistence type="inferred from homology"/>
<gene>
    <name evidence="1" type="primary">argD</name>
    <name type="ordered locus">LMOf2365_1610</name>
</gene>